<sequence>MAKYVAAVDQGTTSTRCMIFDHAGRVVAVDQKEHTQIYPQPGWVEHDPLEIWTRTQEVIDGALRKSGVERSEIAAVGVTNQRETTVVWEKATGKPVYNAIVWQDTRTDQICNQLAQDGGQDRFRPKVGLPLATYFSGPKITWILDNVPGVREKAEQGEVLFGNIDTWLIWNMTGGVNGGVHITDVSNASRTMLMNLETLDWDDDILDVMRVPRAMLPKIMPSAAVYGAAVGALEGIPVAGDLGDQQAALFGQTCFSVGEAKNTYGTGCFMLLNTGLKPVPSQNGLLTTVGYKIGDQPTVYCLEGSIAITGALVQWLRDNLRFFDFSSHIEEYANAVEDSGGIYIVPAFSGLFAPYWKSNARGAIVGLTRYITKNHICRAALEATAYQTREVLDAMNKDSGVDLTALKVDGGMVFNNTLMQFQADILGVPVIRPTVSETTALGAAYAAGLAVGFWKEVEDLRANWGKDHEWSPQMDSATRERLYSGWKKAVTRTFDWVD</sequence>
<protein>
    <recommendedName>
        <fullName evidence="1">Glycerol kinase</fullName>
        <ecNumber evidence="1">2.7.1.30</ecNumber>
    </recommendedName>
    <alternativeName>
        <fullName evidence="1">ATP:glycerol 3-phosphotransferase</fullName>
    </alternativeName>
    <alternativeName>
        <fullName evidence="1">Glycerokinase</fullName>
        <shortName evidence="1">GK</shortName>
    </alternativeName>
</protein>
<evidence type="ECO:0000255" key="1">
    <source>
        <dbReference type="HAMAP-Rule" id="MF_00186"/>
    </source>
</evidence>
<comment type="function">
    <text evidence="1">Key enzyme in the regulation of glycerol uptake and metabolism. Catalyzes the phosphorylation of glycerol to yield sn-glycerol 3-phosphate.</text>
</comment>
<comment type="catalytic activity">
    <reaction evidence="1">
        <text>glycerol + ATP = sn-glycerol 3-phosphate + ADP + H(+)</text>
        <dbReference type="Rhea" id="RHEA:21644"/>
        <dbReference type="ChEBI" id="CHEBI:15378"/>
        <dbReference type="ChEBI" id="CHEBI:17754"/>
        <dbReference type="ChEBI" id="CHEBI:30616"/>
        <dbReference type="ChEBI" id="CHEBI:57597"/>
        <dbReference type="ChEBI" id="CHEBI:456216"/>
        <dbReference type="EC" id="2.7.1.30"/>
    </reaction>
</comment>
<comment type="activity regulation">
    <text evidence="1">Inhibited by fructose 1,6-bisphosphate (FBP).</text>
</comment>
<comment type="pathway">
    <text evidence="1">Polyol metabolism; glycerol degradation via glycerol kinase pathway; sn-glycerol 3-phosphate from glycerol: step 1/1.</text>
</comment>
<comment type="similarity">
    <text evidence="1">Belongs to the FGGY kinase family.</text>
</comment>
<reference key="1">
    <citation type="submission" date="2007-04" db="EMBL/GenBank/DDBJ databases">
        <title>Complete sequence of Roseiflexus sp. RS-1.</title>
        <authorList>
            <consortium name="US DOE Joint Genome Institute"/>
            <person name="Copeland A."/>
            <person name="Lucas S."/>
            <person name="Lapidus A."/>
            <person name="Barry K."/>
            <person name="Detter J.C."/>
            <person name="Glavina del Rio T."/>
            <person name="Hammon N."/>
            <person name="Israni S."/>
            <person name="Dalin E."/>
            <person name="Tice H."/>
            <person name="Pitluck S."/>
            <person name="Chertkov O."/>
            <person name="Brettin T."/>
            <person name="Bruce D."/>
            <person name="Han C."/>
            <person name="Schmutz J."/>
            <person name="Larimer F."/>
            <person name="Land M."/>
            <person name="Hauser L."/>
            <person name="Kyrpides N."/>
            <person name="Mikhailova N."/>
            <person name="Bryant D.A."/>
            <person name="Richardson P."/>
        </authorList>
    </citation>
    <scope>NUCLEOTIDE SEQUENCE [LARGE SCALE GENOMIC DNA]</scope>
    <source>
        <strain>RS-1</strain>
    </source>
</reference>
<feature type="chain" id="PRO_1000020773" description="Glycerol kinase">
    <location>
        <begin position="1"/>
        <end position="498"/>
    </location>
</feature>
<feature type="binding site" evidence="1">
    <location>
        <position position="12"/>
    </location>
    <ligand>
        <name>ADP</name>
        <dbReference type="ChEBI" id="CHEBI:456216"/>
    </ligand>
</feature>
<feature type="binding site" evidence="1">
    <location>
        <position position="12"/>
    </location>
    <ligand>
        <name>ATP</name>
        <dbReference type="ChEBI" id="CHEBI:30616"/>
    </ligand>
</feature>
<feature type="binding site" evidence="1">
    <location>
        <position position="12"/>
    </location>
    <ligand>
        <name>sn-glycerol 3-phosphate</name>
        <dbReference type="ChEBI" id="CHEBI:57597"/>
    </ligand>
</feature>
<feature type="binding site" evidence="1">
    <location>
        <position position="13"/>
    </location>
    <ligand>
        <name>ATP</name>
        <dbReference type="ChEBI" id="CHEBI:30616"/>
    </ligand>
</feature>
<feature type="binding site" evidence="1">
    <location>
        <position position="14"/>
    </location>
    <ligand>
        <name>ATP</name>
        <dbReference type="ChEBI" id="CHEBI:30616"/>
    </ligand>
</feature>
<feature type="binding site" evidence="1">
    <location>
        <position position="16"/>
    </location>
    <ligand>
        <name>ADP</name>
        <dbReference type="ChEBI" id="CHEBI:456216"/>
    </ligand>
</feature>
<feature type="binding site" evidence="1">
    <location>
        <position position="82"/>
    </location>
    <ligand>
        <name>glycerol</name>
        <dbReference type="ChEBI" id="CHEBI:17754"/>
    </ligand>
</feature>
<feature type="binding site" evidence="1">
    <location>
        <position position="82"/>
    </location>
    <ligand>
        <name>sn-glycerol 3-phosphate</name>
        <dbReference type="ChEBI" id="CHEBI:57597"/>
    </ligand>
</feature>
<feature type="binding site" evidence="1">
    <location>
        <position position="83"/>
    </location>
    <ligand>
        <name>glycerol</name>
        <dbReference type="ChEBI" id="CHEBI:17754"/>
    </ligand>
</feature>
<feature type="binding site" evidence="1">
    <location>
        <position position="83"/>
    </location>
    <ligand>
        <name>sn-glycerol 3-phosphate</name>
        <dbReference type="ChEBI" id="CHEBI:57597"/>
    </ligand>
</feature>
<feature type="binding site" evidence="1">
    <location>
        <position position="134"/>
    </location>
    <ligand>
        <name>glycerol</name>
        <dbReference type="ChEBI" id="CHEBI:17754"/>
    </ligand>
</feature>
<feature type="binding site" evidence="1">
    <location>
        <position position="134"/>
    </location>
    <ligand>
        <name>sn-glycerol 3-phosphate</name>
        <dbReference type="ChEBI" id="CHEBI:57597"/>
    </ligand>
</feature>
<feature type="binding site" evidence="1">
    <location>
        <position position="244"/>
    </location>
    <ligand>
        <name>glycerol</name>
        <dbReference type="ChEBI" id="CHEBI:17754"/>
    </ligand>
</feature>
<feature type="binding site" evidence="1">
    <location>
        <position position="244"/>
    </location>
    <ligand>
        <name>sn-glycerol 3-phosphate</name>
        <dbReference type="ChEBI" id="CHEBI:57597"/>
    </ligand>
</feature>
<feature type="binding site" evidence="1">
    <location>
        <position position="245"/>
    </location>
    <ligand>
        <name>glycerol</name>
        <dbReference type="ChEBI" id="CHEBI:17754"/>
    </ligand>
</feature>
<feature type="binding site" evidence="1">
    <location>
        <position position="266"/>
    </location>
    <ligand>
        <name>ADP</name>
        <dbReference type="ChEBI" id="CHEBI:456216"/>
    </ligand>
</feature>
<feature type="binding site" evidence="1">
    <location>
        <position position="266"/>
    </location>
    <ligand>
        <name>ATP</name>
        <dbReference type="ChEBI" id="CHEBI:30616"/>
    </ligand>
</feature>
<feature type="binding site" evidence="1">
    <location>
        <position position="310"/>
    </location>
    <ligand>
        <name>ADP</name>
        <dbReference type="ChEBI" id="CHEBI:456216"/>
    </ligand>
</feature>
<feature type="binding site" evidence="1">
    <location>
        <position position="310"/>
    </location>
    <ligand>
        <name>ATP</name>
        <dbReference type="ChEBI" id="CHEBI:30616"/>
    </ligand>
</feature>
<feature type="binding site" evidence="1">
    <location>
        <position position="314"/>
    </location>
    <ligand>
        <name>ATP</name>
        <dbReference type="ChEBI" id="CHEBI:30616"/>
    </ligand>
</feature>
<feature type="binding site" evidence="1">
    <location>
        <position position="411"/>
    </location>
    <ligand>
        <name>ADP</name>
        <dbReference type="ChEBI" id="CHEBI:456216"/>
    </ligand>
</feature>
<feature type="binding site" evidence="1">
    <location>
        <position position="411"/>
    </location>
    <ligand>
        <name>ATP</name>
        <dbReference type="ChEBI" id="CHEBI:30616"/>
    </ligand>
</feature>
<feature type="binding site" evidence="1">
    <location>
        <position position="415"/>
    </location>
    <ligand>
        <name>ADP</name>
        <dbReference type="ChEBI" id="CHEBI:456216"/>
    </ligand>
</feature>
<proteinExistence type="inferred from homology"/>
<organism>
    <name type="scientific">Roseiflexus sp. (strain RS-1)</name>
    <dbReference type="NCBI Taxonomy" id="357808"/>
    <lineage>
        <taxon>Bacteria</taxon>
        <taxon>Bacillati</taxon>
        <taxon>Chloroflexota</taxon>
        <taxon>Chloroflexia</taxon>
        <taxon>Chloroflexales</taxon>
        <taxon>Roseiflexineae</taxon>
        <taxon>Roseiflexaceae</taxon>
        <taxon>Roseiflexus</taxon>
    </lineage>
</organism>
<accession>A5UU55</accession>
<name>GLPK_ROSS1</name>
<dbReference type="EC" id="2.7.1.30" evidence="1"/>
<dbReference type="EMBL" id="CP000686">
    <property type="protein sequence ID" value="ABQ90158.1"/>
    <property type="molecule type" value="Genomic_DNA"/>
</dbReference>
<dbReference type="RefSeq" id="WP_011956505.1">
    <property type="nucleotide sequence ID" value="NC_009523.1"/>
</dbReference>
<dbReference type="SMR" id="A5UU55"/>
<dbReference type="STRING" id="357808.RoseRS_1768"/>
<dbReference type="KEGG" id="rrs:RoseRS_1768"/>
<dbReference type="eggNOG" id="COG0554">
    <property type="taxonomic scope" value="Bacteria"/>
</dbReference>
<dbReference type="HOGENOM" id="CLU_009281_2_3_0"/>
<dbReference type="OrthoDB" id="9805576at2"/>
<dbReference type="UniPathway" id="UPA00618">
    <property type="reaction ID" value="UER00672"/>
</dbReference>
<dbReference type="Proteomes" id="UP000006554">
    <property type="component" value="Chromosome"/>
</dbReference>
<dbReference type="GO" id="GO:0005829">
    <property type="term" value="C:cytosol"/>
    <property type="evidence" value="ECO:0007669"/>
    <property type="project" value="TreeGrafter"/>
</dbReference>
<dbReference type="GO" id="GO:0005524">
    <property type="term" value="F:ATP binding"/>
    <property type="evidence" value="ECO:0007669"/>
    <property type="project" value="UniProtKB-UniRule"/>
</dbReference>
<dbReference type="GO" id="GO:0004370">
    <property type="term" value="F:glycerol kinase activity"/>
    <property type="evidence" value="ECO:0000250"/>
    <property type="project" value="UniProtKB"/>
</dbReference>
<dbReference type="GO" id="GO:0019563">
    <property type="term" value="P:glycerol catabolic process"/>
    <property type="evidence" value="ECO:0007669"/>
    <property type="project" value="UniProtKB-UniRule"/>
</dbReference>
<dbReference type="GO" id="GO:0006071">
    <property type="term" value="P:glycerol metabolic process"/>
    <property type="evidence" value="ECO:0000250"/>
    <property type="project" value="UniProtKB"/>
</dbReference>
<dbReference type="GO" id="GO:0006072">
    <property type="term" value="P:glycerol-3-phosphate metabolic process"/>
    <property type="evidence" value="ECO:0007669"/>
    <property type="project" value="InterPro"/>
</dbReference>
<dbReference type="CDD" id="cd07769">
    <property type="entry name" value="ASKHA_NBD_FGGY_GK"/>
    <property type="match status" value="1"/>
</dbReference>
<dbReference type="FunFam" id="3.30.420.40:FF:000007">
    <property type="entry name" value="Glycerol kinase"/>
    <property type="match status" value="1"/>
</dbReference>
<dbReference type="FunFam" id="3.30.420.40:FF:000008">
    <property type="entry name" value="Glycerol kinase"/>
    <property type="match status" value="1"/>
</dbReference>
<dbReference type="Gene3D" id="3.30.420.40">
    <property type="match status" value="2"/>
</dbReference>
<dbReference type="HAMAP" id="MF_00186">
    <property type="entry name" value="Glycerol_kin"/>
    <property type="match status" value="1"/>
</dbReference>
<dbReference type="InterPro" id="IPR043129">
    <property type="entry name" value="ATPase_NBD"/>
</dbReference>
<dbReference type="InterPro" id="IPR000577">
    <property type="entry name" value="Carb_kinase_FGGY"/>
</dbReference>
<dbReference type="InterPro" id="IPR018483">
    <property type="entry name" value="Carb_kinase_FGGY_CS"/>
</dbReference>
<dbReference type="InterPro" id="IPR018485">
    <property type="entry name" value="FGGY_C"/>
</dbReference>
<dbReference type="InterPro" id="IPR018484">
    <property type="entry name" value="FGGY_N"/>
</dbReference>
<dbReference type="InterPro" id="IPR005999">
    <property type="entry name" value="Glycerol_kin"/>
</dbReference>
<dbReference type="NCBIfam" id="TIGR01311">
    <property type="entry name" value="glycerol_kin"/>
    <property type="match status" value="1"/>
</dbReference>
<dbReference type="NCBIfam" id="NF000756">
    <property type="entry name" value="PRK00047.1"/>
    <property type="match status" value="1"/>
</dbReference>
<dbReference type="PANTHER" id="PTHR10196:SF69">
    <property type="entry name" value="GLYCEROL KINASE"/>
    <property type="match status" value="1"/>
</dbReference>
<dbReference type="PANTHER" id="PTHR10196">
    <property type="entry name" value="SUGAR KINASE"/>
    <property type="match status" value="1"/>
</dbReference>
<dbReference type="Pfam" id="PF02782">
    <property type="entry name" value="FGGY_C"/>
    <property type="match status" value="1"/>
</dbReference>
<dbReference type="Pfam" id="PF00370">
    <property type="entry name" value="FGGY_N"/>
    <property type="match status" value="1"/>
</dbReference>
<dbReference type="PIRSF" id="PIRSF000538">
    <property type="entry name" value="GlpK"/>
    <property type="match status" value="1"/>
</dbReference>
<dbReference type="SUPFAM" id="SSF53067">
    <property type="entry name" value="Actin-like ATPase domain"/>
    <property type="match status" value="2"/>
</dbReference>
<dbReference type="PROSITE" id="PS00933">
    <property type="entry name" value="FGGY_KINASES_1"/>
    <property type="match status" value="1"/>
</dbReference>
<dbReference type="PROSITE" id="PS00445">
    <property type="entry name" value="FGGY_KINASES_2"/>
    <property type="match status" value="1"/>
</dbReference>
<keyword id="KW-0067">ATP-binding</keyword>
<keyword id="KW-0319">Glycerol metabolism</keyword>
<keyword id="KW-0418">Kinase</keyword>
<keyword id="KW-0547">Nucleotide-binding</keyword>
<keyword id="KW-0808">Transferase</keyword>
<gene>
    <name evidence="1" type="primary">glpK</name>
    <name type="ordered locus">RoseRS_1768</name>
</gene>